<keyword id="KW-0028">Amino-acid biosynthesis</keyword>
<keyword id="KW-0055">Arginine biosynthesis</keyword>
<keyword id="KW-0963">Cytoplasm</keyword>
<keyword id="KW-0456">Lyase</keyword>
<comment type="catalytic activity">
    <reaction evidence="1">
        <text>2-(N(omega)-L-arginino)succinate = fumarate + L-arginine</text>
        <dbReference type="Rhea" id="RHEA:24020"/>
        <dbReference type="ChEBI" id="CHEBI:29806"/>
        <dbReference type="ChEBI" id="CHEBI:32682"/>
        <dbReference type="ChEBI" id="CHEBI:57472"/>
        <dbReference type="EC" id="4.3.2.1"/>
    </reaction>
</comment>
<comment type="pathway">
    <text evidence="1">Amino-acid biosynthesis; L-arginine biosynthesis; L-arginine from L-ornithine and carbamoyl phosphate: step 3/3.</text>
</comment>
<comment type="subcellular location">
    <subcellularLocation>
        <location evidence="1">Cytoplasm</location>
    </subcellularLocation>
</comment>
<comment type="similarity">
    <text evidence="1">Belongs to the lyase 1 family. Argininosuccinate lyase subfamily.</text>
</comment>
<gene>
    <name evidence="1" type="primary">argH</name>
    <name type="ordered locus">Mmcs_2965</name>
</gene>
<feature type="chain" id="PRO_1000000509" description="Argininosuccinate lyase">
    <location>
        <begin position="1"/>
        <end position="470"/>
    </location>
</feature>
<name>ARLY_MYCSS</name>
<reference key="1">
    <citation type="submission" date="2006-06" db="EMBL/GenBank/DDBJ databases">
        <title>Complete sequence of chromosome of Mycobacterium sp. MCS.</title>
        <authorList>
            <consortium name="US DOE Joint Genome Institute"/>
            <person name="Copeland A."/>
            <person name="Lucas S."/>
            <person name="Lapidus A."/>
            <person name="Barry K."/>
            <person name="Detter J.C."/>
            <person name="Glavina del Rio T."/>
            <person name="Hammon N."/>
            <person name="Israni S."/>
            <person name="Dalin E."/>
            <person name="Tice H."/>
            <person name="Pitluck S."/>
            <person name="Martinez M."/>
            <person name="Schmutz J."/>
            <person name="Larimer F."/>
            <person name="Land M."/>
            <person name="Hauser L."/>
            <person name="Kyrpides N."/>
            <person name="Kim E."/>
            <person name="Miller C.D."/>
            <person name="Hughes J.E."/>
            <person name="Anderson A.J."/>
            <person name="Sims R.C."/>
            <person name="Richardson P."/>
        </authorList>
    </citation>
    <scope>NUCLEOTIDE SEQUENCE [LARGE SCALE GENOMIC DNA]</scope>
    <source>
        <strain>MCS</strain>
    </source>
</reference>
<proteinExistence type="inferred from homology"/>
<organism>
    <name type="scientific">Mycobacterium sp. (strain MCS)</name>
    <dbReference type="NCBI Taxonomy" id="164756"/>
    <lineage>
        <taxon>Bacteria</taxon>
        <taxon>Bacillati</taxon>
        <taxon>Actinomycetota</taxon>
        <taxon>Actinomycetes</taxon>
        <taxon>Mycobacteriales</taxon>
        <taxon>Mycobacteriaceae</taxon>
        <taxon>Mycobacterium</taxon>
    </lineage>
</organism>
<accession>Q1B7R2</accession>
<sequence>MSTNEGSLWGGRFADGPADALAALSKSTHFDWVLAPYDIAASKAHARVLFSAGLLTEDQRDGLLAGLDSLASDVADGSFAPLVTDEDVHGALERGLIDRVGAELGGRLRAGRSRNDQVATLFRAWLRDAIRRVADGVLGVVSALATQAAAHPTAIMPGKTHLQSAQPVLLAHHLLAHAHPLLRDVDRLADFDKRAAVSPYGAGALAGSSLGLDPDAIAAELGFDSAADNSIDATAARDFAAEAAFVLAMIGVDLSRLAEDIILWSTTEFGYVTLHDAWSTGSSIMPQKKNPDIAELARGKSGRLIGNLTGLLATLKAQPLAYNRDLQEDKEPVFDSVAQLELLLPAVAGLVSTLSFDVDRMAELAPLGYTLATDVAEWLVRRGVPFRVAHEAAGAAVRAAEARGVGLEDLEDAELTGIHPELTGDVREVLTIEGSVNSRDARGGTAPVQVAKQLNVVRDTADRLRLRLRT</sequence>
<dbReference type="EC" id="4.3.2.1" evidence="1"/>
<dbReference type="EMBL" id="CP000384">
    <property type="protein sequence ID" value="ABG09072.1"/>
    <property type="molecule type" value="Genomic_DNA"/>
</dbReference>
<dbReference type="SMR" id="Q1B7R2"/>
<dbReference type="KEGG" id="mmc:Mmcs_2965"/>
<dbReference type="HOGENOM" id="CLU_027272_2_2_11"/>
<dbReference type="BioCyc" id="MSP164756:G1G6O-3025-MONOMER"/>
<dbReference type="UniPathway" id="UPA00068">
    <property type="reaction ID" value="UER00114"/>
</dbReference>
<dbReference type="GO" id="GO:0005829">
    <property type="term" value="C:cytosol"/>
    <property type="evidence" value="ECO:0007669"/>
    <property type="project" value="TreeGrafter"/>
</dbReference>
<dbReference type="GO" id="GO:0004056">
    <property type="term" value="F:argininosuccinate lyase activity"/>
    <property type="evidence" value="ECO:0007669"/>
    <property type="project" value="UniProtKB-UniRule"/>
</dbReference>
<dbReference type="GO" id="GO:0042450">
    <property type="term" value="P:arginine biosynthetic process via ornithine"/>
    <property type="evidence" value="ECO:0007669"/>
    <property type="project" value="InterPro"/>
</dbReference>
<dbReference type="GO" id="GO:0006526">
    <property type="term" value="P:L-arginine biosynthetic process"/>
    <property type="evidence" value="ECO:0007669"/>
    <property type="project" value="UniProtKB-UniRule"/>
</dbReference>
<dbReference type="CDD" id="cd01359">
    <property type="entry name" value="Argininosuccinate_lyase"/>
    <property type="match status" value="1"/>
</dbReference>
<dbReference type="FunFam" id="1.10.40.30:FF:000001">
    <property type="entry name" value="Argininosuccinate lyase"/>
    <property type="match status" value="1"/>
</dbReference>
<dbReference type="FunFam" id="1.20.200.10:FF:000015">
    <property type="entry name" value="argininosuccinate lyase isoform X2"/>
    <property type="match status" value="1"/>
</dbReference>
<dbReference type="Gene3D" id="1.10.40.30">
    <property type="entry name" value="Fumarase/aspartase (C-terminal domain)"/>
    <property type="match status" value="1"/>
</dbReference>
<dbReference type="Gene3D" id="1.20.200.10">
    <property type="entry name" value="Fumarase/aspartase (Central domain)"/>
    <property type="match status" value="1"/>
</dbReference>
<dbReference type="Gene3D" id="1.10.275.10">
    <property type="entry name" value="Fumarase/aspartase (N-terminal domain)"/>
    <property type="match status" value="1"/>
</dbReference>
<dbReference type="HAMAP" id="MF_00006">
    <property type="entry name" value="Arg_succ_lyase"/>
    <property type="match status" value="1"/>
</dbReference>
<dbReference type="InterPro" id="IPR029419">
    <property type="entry name" value="Arg_succ_lyase_C"/>
</dbReference>
<dbReference type="InterPro" id="IPR009049">
    <property type="entry name" value="Argininosuccinate_lyase"/>
</dbReference>
<dbReference type="InterPro" id="IPR024083">
    <property type="entry name" value="Fumarase/histidase_N"/>
</dbReference>
<dbReference type="InterPro" id="IPR020557">
    <property type="entry name" value="Fumarate_lyase_CS"/>
</dbReference>
<dbReference type="InterPro" id="IPR000362">
    <property type="entry name" value="Fumarate_lyase_fam"/>
</dbReference>
<dbReference type="InterPro" id="IPR022761">
    <property type="entry name" value="Fumarate_lyase_N"/>
</dbReference>
<dbReference type="InterPro" id="IPR008948">
    <property type="entry name" value="L-Aspartase-like"/>
</dbReference>
<dbReference type="NCBIfam" id="TIGR00838">
    <property type="entry name" value="argH"/>
    <property type="match status" value="1"/>
</dbReference>
<dbReference type="PANTHER" id="PTHR43814">
    <property type="entry name" value="ARGININOSUCCINATE LYASE"/>
    <property type="match status" value="1"/>
</dbReference>
<dbReference type="PANTHER" id="PTHR43814:SF1">
    <property type="entry name" value="ARGININOSUCCINATE LYASE"/>
    <property type="match status" value="1"/>
</dbReference>
<dbReference type="Pfam" id="PF14698">
    <property type="entry name" value="ASL_C2"/>
    <property type="match status" value="1"/>
</dbReference>
<dbReference type="Pfam" id="PF00206">
    <property type="entry name" value="Lyase_1"/>
    <property type="match status" value="1"/>
</dbReference>
<dbReference type="PRINTS" id="PR00145">
    <property type="entry name" value="ARGSUCLYASE"/>
</dbReference>
<dbReference type="PRINTS" id="PR00149">
    <property type="entry name" value="FUMRATELYASE"/>
</dbReference>
<dbReference type="SUPFAM" id="SSF48557">
    <property type="entry name" value="L-aspartase-like"/>
    <property type="match status" value="1"/>
</dbReference>
<dbReference type="PROSITE" id="PS00163">
    <property type="entry name" value="FUMARATE_LYASES"/>
    <property type="match status" value="1"/>
</dbReference>
<protein>
    <recommendedName>
        <fullName evidence="1">Argininosuccinate lyase</fullName>
        <shortName evidence="1">ASAL</shortName>
        <ecNumber evidence="1">4.3.2.1</ecNumber>
    </recommendedName>
    <alternativeName>
        <fullName evidence="1">Arginosuccinase</fullName>
    </alternativeName>
</protein>
<evidence type="ECO:0000255" key="1">
    <source>
        <dbReference type="HAMAP-Rule" id="MF_00006"/>
    </source>
</evidence>